<name>SYMM_XENLA</name>
<comment type="catalytic activity">
    <reaction>
        <text>tRNA(Met) + L-methionine + ATP = L-methionyl-tRNA(Met) + AMP + diphosphate</text>
        <dbReference type="Rhea" id="RHEA:13481"/>
        <dbReference type="Rhea" id="RHEA-COMP:9667"/>
        <dbReference type="Rhea" id="RHEA-COMP:9698"/>
        <dbReference type="ChEBI" id="CHEBI:30616"/>
        <dbReference type="ChEBI" id="CHEBI:33019"/>
        <dbReference type="ChEBI" id="CHEBI:57844"/>
        <dbReference type="ChEBI" id="CHEBI:78442"/>
        <dbReference type="ChEBI" id="CHEBI:78530"/>
        <dbReference type="ChEBI" id="CHEBI:456215"/>
        <dbReference type="EC" id="6.1.1.10"/>
    </reaction>
</comment>
<comment type="subcellular location">
    <subcellularLocation>
        <location evidence="1">Mitochondrion matrix</location>
    </subcellularLocation>
</comment>
<comment type="similarity">
    <text evidence="3">Belongs to the class-I aminoacyl-tRNA synthetase family.</text>
</comment>
<feature type="transit peptide" description="Mitochondrion" evidence="2">
    <location>
        <begin position="1"/>
        <end position="10"/>
    </location>
</feature>
<feature type="chain" id="PRO_0000045496" description="Methionine--tRNA ligase, mitochondrial">
    <location>
        <begin position="11"/>
        <end position="562"/>
    </location>
</feature>
<feature type="short sequence motif" description="'HIGH' region">
    <location>
        <begin position="43"/>
        <end position="53"/>
    </location>
</feature>
<feature type="short sequence motif" description="'KMSKS' region">
    <location>
        <begin position="332"/>
        <end position="336"/>
    </location>
</feature>
<feature type="binding site" evidence="1">
    <location>
        <position position="335"/>
    </location>
    <ligand>
        <name>ATP</name>
        <dbReference type="ChEBI" id="CHEBI:30616"/>
    </ligand>
</feature>
<gene>
    <name type="primary">mars2</name>
</gene>
<reference key="1">
    <citation type="submission" date="2003-08" db="EMBL/GenBank/DDBJ databases">
        <authorList>
            <consortium name="NIH - Xenopus Gene Collection (XGC) project"/>
        </authorList>
    </citation>
    <scope>NUCLEOTIDE SEQUENCE [LARGE SCALE MRNA]</scope>
    <source>
        <tissue>Embryo</tissue>
    </source>
</reference>
<dbReference type="EC" id="6.1.1.10"/>
<dbReference type="EMBL" id="BC055977">
    <property type="protein sequence ID" value="AAH55977.1"/>
    <property type="molecule type" value="mRNA"/>
</dbReference>
<dbReference type="RefSeq" id="NP_001079838.1">
    <property type="nucleotide sequence ID" value="NM_001086369.1"/>
</dbReference>
<dbReference type="SMR" id="Q7T0Z0"/>
<dbReference type="DNASU" id="379528"/>
<dbReference type="GeneID" id="379528"/>
<dbReference type="KEGG" id="xla:379528"/>
<dbReference type="AGR" id="Xenbase:XB-GENE-5862169"/>
<dbReference type="CTD" id="379528"/>
<dbReference type="Xenbase" id="XB-GENE-5862169">
    <property type="gene designation" value="mars2.L"/>
</dbReference>
<dbReference type="OrthoDB" id="5844513at2759"/>
<dbReference type="Proteomes" id="UP000186698">
    <property type="component" value="Chromosome 8L"/>
</dbReference>
<dbReference type="Bgee" id="379528">
    <property type="expression patterns" value="Expressed in oocyte and 19 other cell types or tissues"/>
</dbReference>
<dbReference type="GO" id="GO:0005759">
    <property type="term" value="C:mitochondrial matrix"/>
    <property type="evidence" value="ECO:0007669"/>
    <property type="project" value="UniProtKB-SubCell"/>
</dbReference>
<dbReference type="GO" id="GO:0005739">
    <property type="term" value="C:mitochondrion"/>
    <property type="evidence" value="ECO:0000318"/>
    <property type="project" value="GO_Central"/>
</dbReference>
<dbReference type="GO" id="GO:0005524">
    <property type="term" value="F:ATP binding"/>
    <property type="evidence" value="ECO:0007669"/>
    <property type="project" value="UniProtKB-KW"/>
</dbReference>
<dbReference type="GO" id="GO:0004825">
    <property type="term" value="F:methionine-tRNA ligase activity"/>
    <property type="evidence" value="ECO:0000318"/>
    <property type="project" value="GO_Central"/>
</dbReference>
<dbReference type="GO" id="GO:0006431">
    <property type="term" value="P:methionyl-tRNA aminoacylation"/>
    <property type="evidence" value="ECO:0000318"/>
    <property type="project" value="GO_Central"/>
</dbReference>
<dbReference type="CDD" id="cd00814">
    <property type="entry name" value="MetRS_core"/>
    <property type="match status" value="1"/>
</dbReference>
<dbReference type="FunFam" id="2.170.220.10:FF:000001">
    <property type="entry name" value="methionine--tRNA ligase, mitochondrial"/>
    <property type="match status" value="1"/>
</dbReference>
<dbReference type="FunFam" id="1.10.730.10:FF:000022">
    <property type="entry name" value="Methionyl-tRNA synthetase 2, mitochondrial"/>
    <property type="match status" value="1"/>
</dbReference>
<dbReference type="Gene3D" id="2.170.220.10">
    <property type="match status" value="1"/>
</dbReference>
<dbReference type="Gene3D" id="3.40.50.620">
    <property type="entry name" value="HUPs"/>
    <property type="match status" value="1"/>
</dbReference>
<dbReference type="Gene3D" id="1.10.730.10">
    <property type="entry name" value="Isoleucyl-tRNA Synthetase, Domain 1"/>
    <property type="match status" value="1"/>
</dbReference>
<dbReference type="InterPro" id="IPR041872">
    <property type="entry name" value="Anticodon_Met"/>
</dbReference>
<dbReference type="InterPro" id="IPR014758">
    <property type="entry name" value="Met-tRNA_synth"/>
</dbReference>
<dbReference type="InterPro" id="IPR023457">
    <property type="entry name" value="Met-tRNA_synth_2"/>
</dbReference>
<dbReference type="InterPro" id="IPR015413">
    <property type="entry name" value="Methionyl/Leucyl_tRNA_Synth"/>
</dbReference>
<dbReference type="InterPro" id="IPR033911">
    <property type="entry name" value="MetRS_core"/>
</dbReference>
<dbReference type="InterPro" id="IPR014729">
    <property type="entry name" value="Rossmann-like_a/b/a_fold"/>
</dbReference>
<dbReference type="InterPro" id="IPR009080">
    <property type="entry name" value="tRNAsynth_Ia_anticodon-bd"/>
</dbReference>
<dbReference type="NCBIfam" id="TIGR00398">
    <property type="entry name" value="metG"/>
    <property type="match status" value="1"/>
</dbReference>
<dbReference type="PANTHER" id="PTHR43326:SF1">
    <property type="entry name" value="METHIONINE--TRNA LIGASE, MITOCHONDRIAL"/>
    <property type="match status" value="1"/>
</dbReference>
<dbReference type="PANTHER" id="PTHR43326">
    <property type="entry name" value="METHIONYL-TRNA SYNTHETASE"/>
    <property type="match status" value="1"/>
</dbReference>
<dbReference type="Pfam" id="PF19303">
    <property type="entry name" value="Anticodon_3"/>
    <property type="match status" value="1"/>
</dbReference>
<dbReference type="Pfam" id="PF09334">
    <property type="entry name" value="tRNA-synt_1g"/>
    <property type="match status" value="1"/>
</dbReference>
<dbReference type="PRINTS" id="PR01041">
    <property type="entry name" value="TRNASYNTHMET"/>
</dbReference>
<dbReference type="SUPFAM" id="SSF47323">
    <property type="entry name" value="Anticodon-binding domain of a subclass of class I aminoacyl-tRNA synthetases"/>
    <property type="match status" value="1"/>
</dbReference>
<dbReference type="SUPFAM" id="SSF52374">
    <property type="entry name" value="Nucleotidylyl transferase"/>
    <property type="match status" value="1"/>
</dbReference>
<evidence type="ECO:0000250" key="1"/>
<evidence type="ECO:0000255" key="2"/>
<evidence type="ECO:0000305" key="3"/>
<keyword id="KW-0030">Aminoacyl-tRNA synthetase</keyword>
<keyword id="KW-0067">ATP-binding</keyword>
<keyword id="KW-0436">Ligase</keyword>
<keyword id="KW-0496">Mitochondrion</keyword>
<keyword id="KW-0547">Nucleotide-binding</keyword>
<keyword id="KW-0648">Protein biosynthesis</keyword>
<keyword id="KW-1185">Reference proteome</keyword>
<keyword id="KW-0809">Transit peptide</keyword>
<protein>
    <recommendedName>
        <fullName>Methionine--tRNA ligase, mitochondrial</fullName>
        <ecNumber>6.1.1.10</ecNumber>
    </recommendedName>
    <alternativeName>
        <fullName>Methionyl-tRNA synthetase 2</fullName>
    </alternativeName>
    <alternativeName>
        <fullName>Mitochondrial methionyl-tRNA synthetase</fullName>
        <shortName>MtMetRS</shortName>
    </alternativeName>
</protein>
<accession>Q7T0Z0</accession>
<sequence>MLRSLALRTFANILGLSSRSGSTAAMSRNAVASRPHLYTTPIFYVNAAPHLGHVYSALLADVQHRYSAMCGIESKLSTGTDEHGMKVQQAASALGLDPQTFCSTVSLQFRTIFDALDISYTDFVRTTEPRHIEAVSRFWMTLEEQGYIYKGTYEGWYCTSDEAFLSEGQTAEHTDFEGNKIRVSLESGHQVHWVSEENYMFRLSSLRPALLNWLQTEPVHPAPFLKLVHHWLEEELPDLSVSRQRSRLSWGIPVPSDSSHVIYVWLDALVNYLTAAGYPNPQLAPWGPSTHLLGKDILRFHAIYWPAFLIAAGLPPPQKLLVHSHWTSEGTKMSKSLKNVVDPSDCIRRYTTDGLRYYLLRHGAPERDCDFTHRTARMLLNSELADALGGLLNRCTAPAINPMQHFPKFQYENFPVASRDQVHDLLGALQELPVEVDQWIKKFQVHKALECIDACVRRSNAFFQSQAPWKLQRGVEKEAALRDSVIYLTLEALRLYATLLHPAVPGLATVVLDRLGVPHKMRTLKKNTFLAATRGEICYFQAQTLGPDKGLLFPRLEKSEAF</sequence>
<proteinExistence type="evidence at transcript level"/>
<organism>
    <name type="scientific">Xenopus laevis</name>
    <name type="common">African clawed frog</name>
    <dbReference type="NCBI Taxonomy" id="8355"/>
    <lineage>
        <taxon>Eukaryota</taxon>
        <taxon>Metazoa</taxon>
        <taxon>Chordata</taxon>
        <taxon>Craniata</taxon>
        <taxon>Vertebrata</taxon>
        <taxon>Euteleostomi</taxon>
        <taxon>Amphibia</taxon>
        <taxon>Batrachia</taxon>
        <taxon>Anura</taxon>
        <taxon>Pipoidea</taxon>
        <taxon>Pipidae</taxon>
        <taxon>Xenopodinae</taxon>
        <taxon>Xenopus</taxon>
        <taxon>Xenopus</taxon>
    </lineage>
</organism>